<reference key="1">
    <citation type="journal article" date="1999" name="Curr. Biol.">
        <title>Many human endogenous retrovirus K (HERV-K) proviruses are unique to humans.</title>
        <authorList>
            <person name="Barbulescu M."/>
            <person name="Turner G."/>
            <person name="Seaman M.I."/>
            <person name="Deinard A.S."/>
            <person name="Kidd K.K."/>
            <person name="Lenz J."/>
        </authorList>
    </citation>
    <scope>NUCLEOTIDE SEQUENCE [GENOMIC DNA]</scope>
</reference>
<reference key="2">
    <citation type="journal article" date="2002" name="Clin. Cancer Res.">
        <title>A novel gene from the human endogenous retrovirus K expressed in transformed cells.</title>
        <authorList>
            <person name="Armbruester V."/>
            <person name="Sauter M."/>
            <person name="Krautkraemer E."/>
            <person name="Meese E.U."/>
            <person name="Kleiman A."/>
            <person name="Best B."/>
            <person name="Roemer K."/>
            <person name="Mueller-Lantzsch N."/>
        </authorList>
    </citation>
    <scope>CHARACTERIZATION</scope>
</reference>
<protein>
    <recommendedName>
        <fullName>Endogenous retrovirus group K member 24 Np9 protein</fullName>
    </recommendedName>
    <alternativeName>
        <fullName>HERV-K101 Np9 protein</fullName>
    </alternativeName>
    <alternativeName>
        <fullName>HERV-K_22q11.21 provirus Np9 protein</fullName>
    </alternativeName>
</protein>
<keyword id="KW-0895">ERV</keyword>
<keyword id="KW-0539">Nucleus</keyword>
<keyword id="KW-1185">Reference proteome</keyword>
<keyword id="KW-0814">Transposable element</keyword>
<dbReference type="EMBL" id="AF164609">
    <property type="status" value="NOT_ANNOTATED_CDS"/>
    <property type="molecule type" value="Genomic_DNA"/>
</dbReference>
<dbReference type="BioMuta" id="HGNC:39038"/>
<dbReference type="MassIVE" id="P61581"/>
<dbReference type="PaxDb" id="9606-ENSP00000485226"/>
<dbReference type="GeneCards" id="ERVK-24"/>
<dbReference type="HGNC" id="HGNC:39038">
    <property type="gene designation" value="ERVK-24"/>
</dbReference>
<dbReference type="neXtProt" id="NX_P61581"/>
<dbReference type="eggNOG" id="ENOG502TK7B">
    <property type="taxonomic scope" value="Eukaryota"/>
</dbReference>
<dbReference type="PhylomeDB" id="P61581"/>
<dbReference type="Pharos" id="P61581">
    <property type="development level" value="Tdark"/>
</dbReference>
<dbReference type="Proteomes" id="UP000005640">
    <property type="component" value="Unplaced"/>
</dbReference>
<dbReference type="GO" id="GO:0005634">
    <property type="term" value="C:nucleus"/>
    <property type="evidence" value="ECO:0007669"/>
    <property type="project" value="UniProtKB-SubCell"/>
</dbReference>
<name>NP24_HUMAN</name>
<sequence>MNPSEMQRKGPPRRWCLQVYPTAPKRQRPSRTGHDDDGGFVEKKRGKCGEKQERSDCYCVCVERSRHRRLHFVMC</sequence>
<gene>
    <name type="primary">ERVK-24</name>
</gene>
<feature type="chain" id="PRO_0000186785" description="Endogenous retrovirus group K member 24 Np9 protein">
    <location>
        <begin position="1"/>
        <end position="75"/>
    </location>
</feature>
<feature type="region of interest" description="Disordered" evidence="1">
    <location>
        <begin position="22"/>
        <end position="43"/>
    </location>
</feature>
<feature type="compositionally biased region" description="Basic and acidic residues" evidence="1">
    <location>
        <begin position="32"/>
        <end position="43"/>
    </location>
</feature>
<organism>
    <name type="scientific">Homo sapiens</name>
    <name type="common">Human</name>
    <dbReference type="NCBI Taxonomy" id="9606"/>
    <lineage>
        <taxon>Eukaryota</taxon>
        <taxon>Metazoa</taxon>
        <taxon>Chordata</taxon>
        <taxon>Craniata</taxon>
        <taxon>Vertebrata</taxon>
        <taxon>Euteleostomi</taxon>
        <taxon>Mammalia</taxon>
        <taxon>Eutheria</taxon>
        <taxon>Euarchontoglires</taxon>
        <taxon>Primates</taxon>
        <taxon>Haplorrhini</taxon>
        <taxon>Catarrhini</taxon>
        <taxon>Hominidae</taxon>
        <taxon>Homo</taxon>
    </lineage>
</organism>
<comment type="function">
    <text>May possess a function in tumorigenesis.</text>
</comment>
<comment type="subcellular location">
    <subcellularLocation>
        <location>Nucleus</location>
    </subcellularLocation>
    <text>When overexpressed.</text>
</comment>
<comment type="tissue specificity">
    <text>Transcript detectable in many tumor cell lines and tumor tissues.</text>
</comment>
<comment type="miscellaneous">
    <text>Protein expressed at very low level.</text>
</comment>
<comment type="miscellaneous">
    <text>This Np9 protein is encoded by a human specific provirus.</text>
</comment>
<comment type="miscellaneous">
    <text>Has a type 1 genome. The HERV-K(HML-2) family contains type 1 and type 2 genomes depending on the absence or presence of 292 nucleotides at the 5'-end of the env gene. Np9 proteins are translated from a doubly spliced transcript expressed exclusively by HERV-K(HML-2) type 1 proviral genomes. Np9 proteins share 14 N-terminal amino acids with HERV-K(HML-2) type 2 envelope proteins. The rest of the protein is encoded by a small exon located at the 3' end of the envelope gene. This exon shares the same splice acceptor site and therefore overlaps HERV-K(HML-2) type 2 Rec protein second exon. It is yet translated from an alternate reading frame.</text>
</comment>
<comment type="miscellaneous">
    <text>Intergenic, closest flanking gene being PRODH.</text>
</comment>
<accession>P61581</accession>
<proteinExistence type="evidence at protein level"/>
<evidence type="ECO:0000256" key="1">
    <source>
        <dbReference type="SAM" id="MobiDB-lite"/>
    </source>
</evidence>